<feature type="chain" id="PRO_0000102805" description="Succinate--CoA ligase [ADP-forming] subunit alpha">
    <location>
        <begin position="1"/>
        <end position="302"/>
    </location>
</feature>
<feature type="active site" description="Tele-phosphohistidine intermediate" evidence="1">
    <location>
        <position position="247"/>
    </location>
</feature>
<feature type="binding site" evidence="1">
    <location>
        <begin position="17"/>
        <end position="20"/>
    </location>
    <ligand>
        <name>CoA</name>
        <dbReference type="ChEBI" id="CHEBI:57287"/>
    </ligand>
</feature>
<feature type="binding site" evidence="1">
    <location>
        <position position="43"/>
    </location>
    <ligand>
        <name>CoA</name>
        <dbReference type="ChEBI" id="CHEBI:57287"/>
    </ligand>
</feature>
<feature type="binding site" evidence="1">
    <location>
        <begin position="96"/>
        <end position="98"/>
    </location>
    <ligand>
        <name>CoA</name>
        <dbReference type="ChEBI" id="CHEBI:57287"/>
    </ligand>
</feature>
<feature type="binding site" evidence="1">
    <location>
        <position position="159"/>
    </location>
    <ligand>
        <name>substrate</name>
        <note>ligand shared with subunit beta</note>
    </ligand>
</feature>
<proteinExistence type="inferred from homology"/>
<evidence type="ECO:0000255" key="1">
    <source>
        <dbReference type="HAMAP-Rule" id="MF_01988"/>
    </source>
</evidence>
<dbReference type="EC" id="6.2.1.5" evidence="1"/>
<dbReference type="EMBL" id="AE015929">
    <property type="protein sequence ID" value="AAO04521.1"/>
    <property type="molecule type" value="Genomic_DNA"/>
</dbReference>
<dbReference type="RefSeq" id="NP_764479.1">
    <property type="nucleotide sequence ID" value="NC_004461.1"/>
</dbReference>
<dbReference type="RefSeq" id="WP_001829473.1">
    <property type="nucleotide sequence ID" value="NZ_WBME01000001.1"/>
</dbReference>
<dbReference type="SMR" id="Q8CPH4"/>
<dbReference type="KEGG" id="sep:SE_0924"/>
<dbReference type="PATRIC" id="fig|176280.10.peg.898"/>
<dbReference type="eggNOG" id="COG0074">
    <property type="taxonomic scope" value="Bacteria"/>
</dbReference>
<dbReference type="HOGENOM" id="CLU_052104_0_0_9"/>
<dbReference type="OrthoDB" id="9807196at2"/>
<dbReference type="UniPathway" id="UPA00223">
    <property type="reaction ID" value="UER00999"/>
</dbReference>
<dbReference type="Proteomes" id="UP000001411">
    <property type="component" value="Chromosome"/>
</dbReference>
<dbReference type="GO" id="GO:0005829">
    <property type="term" value="C:cytosol"/>
    <property type="evidence" value="ECO:0007669"/>
    <property type="project" value="TreeGrafter"/>
</dbReference>
<dbReference type="GO" id="GO:0009361">
    <property type="term" value="C:succinate-CoA ligase complex (ADP-forming)"/>
    <property type="evidence" value="ECO:0007669"/>
    <property type="project" value="TreeGrafter"/>
</dbReference>
<dbReference type="GO" id="GO:0000166">
    <property type="term" value="F:nucleotide binding"/>
    <property type="evidence" value="ECO:0007669"/>
    <property type="project" value="UniProtKB-KW"/>
</dbReference>
<dbReference type="GO" id="GO:0004775">
    <property type="term" value="F:succinate-CoA ligase (ADP-forming) activity"/>
    <property type="evidence" value="ECO:0007669"/>
    <property type="project" value="UniProtKB-UniRule"/>
</dbReference>
<dbReference type="GO" id="GO:0004776">
    <property type="term" value="F:succinate-CoA ligase (GDP-forming) activity"/>
    <property type="evidence" value="ECO:0007669"/>
    <property type="project" value="TreeGrafter"/>
</dbReference>
<dbReference type="GO" id="GO:0006099">
    <property type="term" value="P:tricarboxylic acid cycle"/>
    <property type="evidence" value="ECO:0007669"/>
    <property type="project" value="UniProtKB-UniRule"/>
</dbReference>
<dbReference type="FunFam" id="3.40.50.261:FF:000002">
    <property type="entry name" value="Succinate--CoA ligase [ADP-forming] subunit alpha"/>
    <property type="match status" value="1"/>
</dbReference>
<dbReference type="FunFam" id="3.40.50.720:FF:000002">
    <property type="entry name" value="Succinate--CoA ligase [ADP-forming] subunit alpha"/>
    <property type="match status" value="1"/>
</dbReference>
<dbReference type="Gene3D" id="3.40.50.720">
    <property type="entry name" value="NAD(P)-binding Rossmann-like Domain"/>
    <property type="match status" value="1"/>
</dbReference>
<dbReference type="Gene3D" id="3.40.50.261">
    <property type="entry name" value="Succinyl-CoA synthetase domains"/>
    <property type="match status" value="1"/>
</dbReference>
<dbReference type="HAMAP" id="MF_01988">
    <property type="entry name" value="Succ_CoA_alpha"/>
    <property type="match status" value="1"/>
</dbReference>
<dbReference type="InterPro" id="IPR017440">
    <property type="entry name" value="Cit_synth/succinyl-CoA_lig_AS"/>
</dbReference>
<dbReference type="InterPro" id="IPR033847">
    <property type="entry name" value="Citrt_syn/SCS-alpha_CS"/>
</dbReference>
<dbReference type="InterPro" id="IPR003781">
    <property type="entry name" value="CoA-bd"/>
</dbReference>
<dbReference type="InterPro" id="IPR005810">
    <property type="entry name" value="CoA_lig_alpha"/>
</dbReference>
<dbReference type="InterPro" id="IPR036291">
    <property type="entry name" value="NAD(P)-bd_dom_sf"/>
</dbReference>
<dbReference type="InterPro" id="IPR005811">
    <property type="entry name" value="SUCC_ACL_C"/>
</dbReference>
<dbReference type="InterPro" id="IPR016102">
    <property type="entry name" value="Succinyl-CoA_synth-like"/>
</dbReference>
<dbReference type="NCBIfam" id="NF004230">
    <property type="entry name" value="PRK05678.1"/>
    <property type="match status" value="1"/>
</dbReference>
<dbReference type="NCBIfam" id="TIGR01019">
    <property type="entry name" value="sucCoAalpha"/>
    <property type="match status" value="1"/>
</dbReference>
<dbReference type="PANTHER" id="PTHR11117:SF2">
    <property type="entry name" value="SUCCINATE--COA LIGASE [ADP_GDP-FORMING] SUBUNIT ALPHA, MITOCHONDRIAL"/>
    <property type="match status" value="1"/>
</dbReference>
<dbReference type="PANTHER" id="PTHR11117">
    <property type="entry name" value="SUCCINYL-COA LIGASE SUBUNIT ALPHA"/>
    <property type="match status" value="1"/>
</dbReference>
<dbReference type="Pfam" id="PF02629">
    <property type="entry name" value="CoA_binding"/>
    <property type="match status" value="1"/>
</dbReference>
<dbReference type="Pfam" id="PF00549">
    <property type="entry name" value="Ligase_CoA"/>
    <property type="match status" value="1"/>
</dbReference>
<dbReference type="PIRSF" id="PIRSF001553">
    <property type="entry name" value="SucCS_alpha"/>
    <property type="match status" value="1"/>
</dbReference>
<dbReference type="PRINTS" id="PR01798">
    <property type="entry name" value="SCOASYNTHASE"/>
</dbReference>
<dbReference type="SMART" id="SM00881">
    <property type="entry name" value="CoA_binding"/>
    <property type="match status" value="1"/>
</dbReference>
<dbReference type="SUPFAM" id="SSF51735">
    <property type="entry name" value="NAD(P)-binding Rossmann-fold domains"/>
    <property type="match status" value="1"/>
</dbReference>
<dbReference type="SUPFAM" id="SSF52210">
    <property type="entry name" value="Succinyl-CoA synthetase domains"/>
    <property type="match status" value="1"/>
</dbReference>
<dbReference type="PROSITE" id="PS01216">
    <property type="entry name" value="SUCCINYL_COA_LIG_1"/>
    <property type="match status" value="1"/>
</dbReference>
<dbReference type="PROSITE" id="PS00399">
    <property type="entry name" value="SUCCINYL_COA_LIG_2"/>
    <property type="match status" value="1"/>
</dbReference>
<accession>Q8CPH4</accession>
<keyword id="KW-0436">Ligase</keyword>
<keyword id="KW-0547">Nucleotide-binding</keyword>
<keyword id="KW-0816">Tricarboxylic acid cycle</keyword>
<sequence>MSVFIDKNTKVMVQGITGSTALFHTKQMLDYGTQIVAGVTPGKGGQVVEGVPVYNTVEEAKNETGANVSVVYVPAPFAADSIIEAADADLDMVICITEHIPVVDMVKVKRYLQGRKTRLVGPNCPGVITADECKIGIMPGYIHKKGHVGVVSRSGTLTYEAVHQLTEEGIGQTTAVGIGGDPVNGTNFIDVLKAFNEDSETKAVVMIGEIGGTAEEEAAQWIKENMNKPVIGFIGGQTAPPGKRMGHAGAIISGGKGTASEKIKTLNDCGVETADTPSEIGTTLIDAAKKAGIYEELLTIKK</sequence>
<comment type="function">
    <text evidence="1">Succinyl-CoA synthetase functions in the citric acid cycle (TCA), coupling the hydrolysis of succinyl-CoA to the synthesis of either ATP or GTP and thus represents the only step of substrate-level phosphorylation in the TCA. The alpha subunit of the enzyme binds the substrates coenzyme A and phosphate, while succinate binding and nucleotide specificity is provided by the beta subunit.</text>
</comment>
<comment type="catalytic activity">
    <reaction evidence="1">
        <text>succinate + ATP + CoA = succinyl-CoA + ADP + phosphate</text>
        <dbReference type="Rhea" id="RHEA:17661"/>
        <dbReference type="ChEBI" id="CHEBI:30031"/>
        <dbReference type="ChEBI" id="CHEBI:30616"/>
        <dbReference type="ChEBI" id="CHEBI:43474"/>
        <dbReference type="ChEBI" id="CHEBI:57287"/>
        <dbReference type="ChEBI" id="CHEBI:57292"/>
        <dbReference type="ChEBI" id="CHEBI:456216"/>
        <dbReference type="EC" id="6.2.1.5"/>
    </reaction>
    <physiologicalReaction direction="right-to-left" evidence="1">
        <dbReference type="Rhea" id="RHEA:17663"/>
    </physiologicalReaction>
</comment>
<comment type="catalytic activity">
    <reaction evidence="1">
        <text>GTP + succinate + CoA = succinyl-CoA + GDP + phosphate</text>
        <dbReference type="Rhea" id="RHEA:22120"/>
        <dbReference type="ChEBI" id="CHEBI:30031"/>
        <dbReference type="ChEBI" id="CHEBI:37565"/>
        <dbReference type="ChEBI" id="CHEBI:43474"/>
        <dbReference type="ChEBI" id="CHEBI:57287"/>
        <dbReference type="ChEBI" id="CHEBI:57292"/>
        <dbReference type="ChEBI" id="CHEBI:58189"/>
    </reaction>
    <physiologicalReaction direction="right-to-left" evidence="1">
        <dbReference type="Rhea" id="RHEA:22122"/>
    </physiologicalReaction>
</comment>
<comment type="pathway">
    <text evidence="1">Carbohydrate metabolism; tricarboxylic acid cycle; succinate from succinyl-CoA (ligase route): step 1/1.</text>
</comment>
<comment type="subunit">
    <text evidence="1">Heterotetramer of two alpha and two beta subunits.</text>
</comment>
<comment type="similarity">
    <text evidence="1">Belongs to the succinate/malate CoA ligase alpha subunit family.</text>
</comment>
<protein>
    <recommendedName>
        <fullName evidence="1">Succinate--CoA ligase [ADP-forming] subunit alpha</fullName>
        <ecNumber evidence="1">6.2.1.5</ecNumber>
    </recommendedName>
    <alternativeName>
        <fullName evidence="1">Succinyl-CoA synthetase subunit alpha</fullName>
        <shortName evidence="1">SCS-alpha</shortName>
    </alternativeName>
</protein>
<gene>
    <name evidence="1" type="primary">sucD</name>
    <name type="ordered locus">SE_0924</name>
</gene>
<name>SUCD_STAES</name>
<reference key="1">
    <citation type="journal article" date="2003" name="Mol. Microbiol.">
        <title>Genome-based analysis of virulence genes in a non-biofilm-forming Staphylococcus epidermidis strain (ATCC 12228).</title>
        <authorList>
            <person name="Zhang Y.-Q."/>
            <person name="Ren S.-X."/>
            <person name="Li H.-L."/>
            <person name="Wang Y.-X."/>
            <person name="Fu G."/>
            <person name="Yang J."/>
            <person name="Qin Z.-Q."/>
            <person name="Miao Y.-G."/>
            <person name="Wang W.-Y."/>
            <person name="Chen R.-S."/>
            <person name="Shen Y."/>
            <person name="Chen Z."/>
            <person name="Yuan Z.-H."/>
            <person name="Zhao G.-P."/>
            <person name="Qu D."/>
            <person name="Danchin A."/>
            <person name="Wen Y.-M."/>
        </authorList>
    </citation>
    <scope>NUCLEOTIDE SEQUENCE [LARGE SCALE GENOMIC DNA]</scope>
    <source>
        <strain>ATCC 12228 / FDA PCI 1200</strain>
    </source>
</reference>
<organism>
    <name type="scientific">Staphylococcus epidermidis (strain ATCC 12228 / FDA PCI 1200)</name>
    <dbReference type="NCBI Taxonomy" id="176280"/>
    <lineage>
        <taxon>Bacteria</taxon>
        <taxon>Bacillati</taxon>
        <taxon>Bacillota</taxon>
        <taxon>Bacilli</taxon>
        <taxon>Bacillales</taxon>
        <taxon>Staphylococcaceae</taxon>
        <taxon>Staphylococcus</taxon>
    </lineage>
</organism>